<organism>
    <name type="scientific">Mus musculus</name>
    <name type="common">Mouse</name>
    <dbReference type="NCBI Taxonomy" id="10090"/>
    <lineage>
        <taxon>Eukaryota</taxon>
        <taxon>Metazoa</taxon>
        <taxon>Chordata</taxon>
        <taxon>Craniata</taxon>
        <taxon>Vertebrata</taxon>
        <taxon>Euteleostomi</taxon>
        <taxon>Mammalia</taxon>
        <taxon>Eutheria</taxon>
        <taxon>Euarchontoglires</taxon>
        <taxon>Glires</taxon>
        <taxon>Rodentia</taxon>
        <taxon>Myomorpha</taxon>
        <taxon>Muroidea</taxon>
        <taxon>Muridae</taxon>
        <taxon>Murinae</taxon>
        <taxon>Mus</taxon>
        <taxon>Mus</taxon>
    </lineage>
</organism>
<evidence type="ECO:0000255" key="1">
    <source>
        <dbReference type="PROSITE-ProRule" id="PRU00114"/>
    </source>
</evidence>
<evidence type="ECO:0007829" key="2">
    <source>
        <dbReference type="PDB" id="1A14"/>
    </source>
</evidence>
<protein>
    <recommendedName>
        <fullName>Ig kappa chain V-V region HP 93G7</fullName>
    </recommendedName>
</protein>
<comment type="miscellaneous">
    <text>Anti-arsonate hybridoma protein.</text>
</comment>
<proteinExistence type="evidence at protein level"/>
<feature type="chain" id="PRO_0000059800" description="Ig kappa chain V-V region HP 93G7">
    <location>
        <begin position="1"/>
        <end position="108" status="greater than"/>
    </location>
</feature>
<feature type="region of interest" description="Framework-1">
    <location>
        <begin position="1"/>
        <end position="23"/>
    </location>
</feature>
<feature type="region of interest" description="Complementarity-determining-1">
    <location>
        <begin position="24"/>
        <end position="34"/>
    </location>
</feature>
<feature type="region of interest" description="Framework-2">
    <location>
        <begin position="35"/>
        <end position="49"/>
    </location>
</feature>
<feature type="region of interest" description="Complementarity-determining-2">
    <location>
        <begin position="50"/>
        <end position="56"/>
    </location>
</feature>
<feature type="region of interest" description="Framework-3">
    <location>
        <begin position="57"/>
        <end position="88"/>
    </location>
</feature>
<feature type="region of interest" description="Complementarity-determining-3">
    <location>
        <begin position="89"/>
        <end position="97"/>
    </location>
</feature>
<feature type="region of interest" description="Framework-4">
    <location>
        <begin position="98"/>
        <end position="108"/>
    </location>
</feature>
<feature type="disulfide bond" evidence="1">
    <location>
        <begin position="23"/>
        <end position="88"/>
    </location>
</feature>
<feature type="non-terminal residue">
    <location>
        <position position="108"/>
    </location>
</feature>
<feature type="strand" evidence="2">
    <location>
        <begin position="4"/>
        <end position="7"/>
    </location>
</feature>
<feature type="strand" evidence="2">
    <location>
        <begin position="19"/>
        <end position="27"/>
    </location>
</feature>
<feature type="strand" evidence="2">
    <location>
        <begin position="33"/>
        <end position="38"/>
    </location>
</feature>
<feature type="strand" evidence="2">
    <location>
        <begin position="44"/>
        <end position="49"/>
    </location>
</feature>
<feature type="turn" evidence="2">
    <location>
        <begin position="50"/>
        <end position="52"/>
    </location>
</feature>
<feature type="strand" evidence="2">
    <location>
        <begin position="62"/>
        <end position="67"/>
    </location>
</feature>
<feature type="strand" evidence="2">
    <location>
        <begin position="70"/>
        <end position="77"/>
    </location>
</feature>
<feature type="helix" evidence="2">
    <location>
        <begin position="80"/>
        <end position="82"/>
    </location>
</feature>
<feature type="strand" evidence="2">
    <location>
        <begin position="84"/>
        <end position="90"/>
    </location>
</feature>
<feature type="strand" evidence="2">
    <location>
        <begin position="92"/>
        <end position="95"/>
    </location>
</feature>
<feature type="strand" evidence="2">
    <location>
        <begin position="97"/>
        <end position="99"/>
    </location>
</feature>
<reference key="1">
    <citation type="journal article" date="1981" name="Proc. Natl. Acad. Sci. U.S.A.">
        <title>Complete amino acid sequence of light chain variable regions derived from five monoclonal anti-p-azophenylarsonate antibodies differing with respect to a crossreactive idiotype.</title>
        <authorList>
            <person name="Siegelman M."/>
            <person name="Capra J.D."/>
        </authorList>
    </citation>
    <scope>PROTEIN SEQUENCE</scope>
    <source>
        <strain>A/J</strain>
    </source>
</reference>
<accession>P01645</accession>
<name>KV5AC_MOUSE</name>
<dbReference type="PIR" id="A28044">
    <property type="entry name" value="A28044"/>
</dbReference>
<dbReference type="PIR" id="B26405">
    <property type="entry name" value="B26405"/>
</dbReference>
<dbReference type="PIR" id="B28044">
    <property type="entry name" value="B28044"/>
</dbReference>
<dbReference type="PIR" id="B49026">
    <property type="entry name" value="B49026"/>
</dbReference>
<dbReference type="PIR" id="C26405">
    <property type="entry name" value="C26405"/>
</dbReference>
<dbReference type="PIR" id="D48677">
    <property type="entry name" value="D48677"/>
</dbReference>
<dbReference type="PIR" id="PL0282">
    <property type="entry name" value="PL0282"/>
</dbReference>
<dbReference type="PDB" id="1A14">
    <property type="method" value="X-ray"/>
    <property type="resolution" value="2.50 A"/>
    <property type="chains" value="L=1-102"/>
</dbReference>
<dbReference type="PDBsum" id="1A14"/>
<dbReference type="SMR" id="P01645"/>
<dbReference type="FunCoup" id="P01645">
    <property type="interactions" value="614"/>
</dbReference>
<dbReference type="InParanoid" id="P01645"/>
<dbReference type="EvolutionaryTrace" id="P01645"/>
<dbReference type="Proteomes" id="UP000000589">
    <property type="component" value="Unplaced"/>
</dbReference>
<dbReference type="RNAct" id="P01645">
    <property type="molecule type" value="protein"/>
</dbReference>
<dbReference type="GO" id="GO:0019814">
    <property type="term" value="C:immunoglobulin complex"/>
    <property type="evidence" value="ECO:0000318"/>
    <property type="project" value="GO_Central"/>
</dbReference>
<dbReference type="GO" id="GO:0002250">
    <property type="term" value="P:adaptive immune response"/>
    <property type="evidence" value="ECO:0007669"/>
    <property type="project" value="UniProtKB-KW"/>
</dbReference>
<dbReference type="GO" id="GO:0006955">
    <property type="term" value="P:immune response"/>
    <property type="evidence" value="ECO:0000318"/>
    <property type="project" value="GO_Central"/>
</dbReference>
<dbReference type="CDD" id="cd04980">
    <property type="entry name" value="IgV_L_kappa"/>
    <property type="match status" value="1"/>
</dbReference>
<dbReference type="FunFam" id="2.60.40.10:FF:000212">
    <property type="entry name" value="Immunoglobulin kappa chain variable 12-38"/>
    <property type="match status" value="1"/>
</dbReference>
<dbReference type="Gene3D" id="2.60.40.10">
    <property type="entry name" value="Immunoglobulins"/>
    <property type="match status" value="1"/>
</dbReference>
<dbReference type="InterPro" id="IPR007110">
    <property type="entry name" value="Ig-like_dom"/>
</dbReference>
<dbReference type="InterPro" id="IPR036179">
    <property type="entry name" value="Ig-like_dom_sf"/>
</dbReference>
<dbReference type="InterPro" id="IPR013783">
    <property type="entry name" value="Ig-like_fold"/>
</dbReference>
<dbReference type="InterPro" id="IPR003599">
    <property type="entry name" value="Ig_sub"/>
</dbReference>
<dbReference type="InterPro" id="IPR013106">
    <property type="entry name" value="Ig_V-set"/>
</dbReference>
<dbReference type="InterPro" id="IPR050150">
    <property type="entry name" value="IgV_Light_Chain"/>
</dbReference>
<dbReference type="PANTHER" id="PTHR23267">
    <property type="entry name" value="IMMUNOGLOBULIN LIGHT CHAIN"/>
    <property type="match status" value="1"/>
</dbReference>
<dbReference type="Pfam" id="PF07686">
    <property type="entry name" value="V-set"/>
    <property type="match status" value="1"/>
</dbReference>
<dbReference type="SMART" id="SM00409">
    <property type="entry name" value="IG"/>
    <property type="match status" value="1"/>
</dbReference>
<dbReference type="SMART" id="SM00406">
    <property type="entry name" value="IGv"/>
    <property type="match status" value="1"/>
</dbReference>
<dbReference type="SUPFAM" id="SSF48726">
    <property type="entry name" value="Immunoglobulin"/>
    <property type="match status" value="1"/>
</dbReference>
<dbReference type="PROSITE" id="PS50835">
    <property type="entry name" value="IG_LIKE"/>
    <property type="match status" value="1"/>
</dbReference>
<keyword id="KW-0002">3D-structure</keyword>
<keyword id="KW-1064">Adaptive immunity</keyword>
<keyword id="KW-0903">Direct protein sequencing</keyword>
<keyword id="KW-1015">Disulfide bond</keyword>
<keyword id="KW-0391">Immunity</keyword>
<keyword id="KW-1280">Immunoglobulin</keyword>
<keyword id="KW-1185">Reference proteome</keyword>
<sequence>DIQMTQTTSSLSASLGDRVTISCRASQDISNYLNWYQQKPDGTVKLLIYYTSRLHSGVPSRFSGSGSGTDYSLTISNLEQEDIATYFCQQGNMLPRTFGGGTKLEIKR</sequence>